<reference key="1">
    <citation type="journal article" date="1998" name="DNA Res.">
        <title>Structural analysis of Arabidopsis thaliana chromosome 5. V. Sequence features of the regions of 1,381,565 bp covered by twenty one physically assigned P1 and TAC clones.</title>
        <authorList>
            <person name="Kaneko T."/>
            <person name="Kotani H."/>
            <person name="Nakamura Y."/>
            <person name="Sato S."/>
            <person name="Asamizu E."/>
            <person name="Miyajima N."/>
            <person name="Tabata S."/>
        </authorList>
    </citation>
    <scope>NUCLEOTIDE SEQUENCE [LARGE SCALE GENOMIC DNA]</scope>
    <source>
        <strain>cv. Columbia</strain>
    </source>
</reference>
<reference key="2">
    <citation type="journal article" date="2017" name="Plant J.">
        <title>Araport11: a complete reannotation of the Arabidopsis thaliana reference genome.</title>
        <authorList>
            <person name="Cheng C.Y."/>
            <person name="Krishnakumar V."/>
            <person name="Chan A.P."/>
            <person name="Thibaud-Nissen F."/>
            <person name="Schobel S."/>
            <person name="Town C.D."/>
        </authorList>
    </citation>
    <scope>GENOME REANNOTATION</scope>
    <source>
        <strain>cv. Columbia</strain>
    </source>
</reference>
<reference key="3">
    <citation type="journal article" date="2005" name="Plant Physiol.">
        <title>Genome organization of more than 300 defensin-like genes in Arabidopsis.</title>
        <authorList>
            <person name="Silverstein K.A.T."/>
            <person name="Graham M.A."/>
            <person name="Paape T.D."/>
            <person name="VandenBosch K.A."/>
        </authorList>
    </citation>
    <scope>GENE FAMILY</scope>
</reference>
<keyword id="KW-0929">Antimicrobial</keyword>
<keyword id="KW-1015">Disulfide bond</keyword>
<keyword id="KW-0295">Fungicide</keyword>
<keyword id="KW-0611">Plant defense</keyword>
<keyword id="KW-1185">Reference proteome</keyword>
<keyword id="KW-0964">Secreted</keyword>
<keyword id="KW-0732">Signal</keyword>
<gene>
    <name type="ordered locus">At5g54215</name>
    <name type="ORF">MDK4</name>
</gene>
<organism>
    <name type="scientific">Arabidopsis thaliana</name>
    <name type="common">Mouse-ear cress</name>
    <dbReference type="NCBI Taxonomy" id="3702"/>
    <lineage>
        <taxon>Eukaryota</taxon>
        <taxon>Viridiplantae</taxon>
        <taxon>Streptophyta</taxon>
        <taxon>Embryophyta</taxon>
        <taxon>Tracheophyta</taxon>
        <taxon>Spermatophyta</taxon>
        <taxon>Magnoliopsida</taxon>
        <taxon>eudicotyledons</taxon>
        <taxon>Gunneridae</taxon>
        <taxon>Pentapetalae</taxon>
        <taxon>rosids</taxon>
        <taxon>malvids</taxon>
        <taxon>Brassicales</taxon>
        <taxon>Brassicaceae</taxon>
        <taxon>Camelineae</taxon>
        <taxon>Arabidopsis</taxon>
    </lineage>
</organism>
<accession>Q2V2Y6</accession>
<sequence length="83" mass="8939">MGSSRLMITFIVVAMLAISSDLFSVQIGISVQAAPPTCGRDCTEKFLTQDCDKYCVGLSYKKGVCILSEGLPPKTSTYRCCCS</sequence>
<protein>
    <recommendedName>
        <fullName>Putative defensin-like protein 66</fullName>
    </recommendedName>
</protein>
<proteinExistence type="inferred from homology"/>
<dbReference type="EMBL" id="AB010695">
    <property type="status" value="NOT_ANNOTATED_CDS"/>
    <property type="molecule type" value="Genomic_DNA"/>
</dbReference>
<dbReference type="EMBL" id="CP002688">
    <property type="protein sequence ID" value="AED96468.1"/>
    <property type="molecule type" value="Genomic_DNA"/>
</dbReference>
<dbReference type="RefSeq" id="NP_001032073.1">
    <property type="nucleotide sequence ID" value="NM_001036996.2"/>
</dbReference>
<dbReference type="iPTMnet" id="Q2V2Y6"/>
<dbReference type="PaxDb" id="3702-AT5G54215.1"/>
<dbReference type="EnsemblPlants" id="AT5G54215.1">
    <property type="protein sequence ID" value="AT5G54215.1"/>
    <property type="gene ID" value="AT5G54215"/>
</dbReference>
<dbReference type="GeneID" id="3771506"/>
<dbReference type="Gramene" id="AT5G54215.1">
    <property type="protein sequence ID" value="AT5G54215.1"/>
    <property type="gene ID" value="AT5G54215"/>
</dbReference>
<dbReference type="KEGG" id="ath:AT5G54215"/>
<dbReference type="Araport" id="AT5G54215"/>
<dbReference type="TAIR" id="AT5G54215"/>
<dbReference type="HOGENOM" id="CLU_175051_0_0_1"/>
<dbReference type="InParanoid" id="Q2V2Y6"/>
<dbReference type="OMA" id="KTSTYRC"/>
<dbReference type="PhylomeDB" id="Q2V2Y6"/>
<dbReference type="PRO" id="PR:Q2V2Y6"/>
<dbReference type="Proteomes" id="UP000006548">
    <property type="component" value="Chromosome 5"/>
</dbReference>
<dbReference type="ExpressionAtlas" id="Q2V2Y6">
    <property type="expression patterns" value="baseline"/>
</dbReference>
<dbReference type="GO" id="GO:0005576">
    <property type="term" value="C:extracellular region"/>
    <property type="evidence" value="ECO:0007669"/>
    <property type="project" value="UniProtKB-SubCell"/>
</dbReference>
<dbReference type="GO" id="GO:0050832">
    <property type="term" value="P:defense response to fungus"/>
    <property type="evidence" value="ECO:0007669"/>
    <property type="project" value="UniProtKB-KW"/>
</dbReference>
<dbReference type="GO" id="GO:0031640">
    <property type="term" value="P:killing of cells of another organism"/>
    <property type="evidence" value="ECO:0007669"/>
    <property type="project" value="UniProtKB-KW"/>
</dbReference>
<dbReference type="InterPro" id="IPR056373">
    <property type="entry name" value="Defensin-like_dom"/>
</dbReference>
<dbReference type="Pfam" id="PF24552">
    <property type="entry name" value="Defensin"/>
    <property type="match status" value="1"/>
</dbReference>
<name>DEF66_ARATH</name>
<comment type="subcellular location">
    <subcellularLocation>
        <location evidence="1">Secreted</location>
    </subcellularLocation>
</comment>
<comment type="similarity">
    <text evidence="3">Belongs to the DEFL family.</text>
</comment>
<evidence type="ECO:0000250" key="1"/>
<evidence type="ECO:0000255" key="2"/>
<evidence type="ECO:0000305" key="3"/>
<feature type="signal peptide" evidence="2">
    <location>
        <begin position="1"/>
        <end position="22"/>
    </location>
</feature>
<feature type="chain" id="PRO_0000379644" description="Putative defensin-like protein 66">
    <location>
        <begin position="23"/>
        <end position="83"/>
    </location>
</feature>
<feature type="disulfide bond" evidence="1">
    <location>
        <begin position="38"/>
        <end position="82"/>
    </location>
</feature>
<feature type="disulfide bond" evidence="1">
    <location>
        <begin position="42"/>
        <end position="65"/>
    </location>
</feature>
<feature type="disulfide bond" evidence="1">
    <location>
        <begin position="51"/>
        <end position="80"/>
    </location>
</feature>
<feature type="disulfide bond" evidence="1">
    <location>
        <begin position="55"/>
        <end position="81"/>
    </location>
</feature>